<evidence type="ECO:0000250" key="1"/>
<evidence type="ECO:0000255" key="2"/>
<evidence type="ECO:0000305" key="3"/>
<protein>
    <recommendedName>
        <fullName>IAA-amino acid hydrolase ILR1-like 8</fullName>
        <ecNumber>3.5.1.-</ecNumber>
    </recommendedName>
</protein>
<comment type="function">
    <text evidence="1">Hydrolyzes certain amino acid conjugates of the plant growth regulator indole-3-acetic acid (IAA).</text>
</comment>
<comment type="similarity">
    <text evidence="3">Belongs to the peptidase M20 family.</text>
</comment>
<comment type="sequence caution" evidence="3">
    <conflict type="erroneous gene model prediction">
        <sequence resource="EMBL-CDS" id="BAF21208"/>
    </conflict>
</comment>
<organism>
    <name type="scientific">Oryza sativa subsp. japonica</name>
    <name type="common">Rice</name>
    <dbReference type="NCBI Taxonomy" id="39947"/>
    <lineage>
        <taxon>Eukaryota</taxon>
        <taxon>Viridiplantae</taxon>
        <taxon>Streptophyta</taxon>
        <taxon>Embryophyta</taxon>
        <taxon>Tracheophyta</taxon>
        <taxon>Spermatophyta</taxon>
        <taxon>Magnoliopsida</taxon>
        <taxon>Liliopsida</taxon>
        <taxon>Poales</taxon>
        <taxon>Poaceae</taxon>
        <taxon>BOP clade</taxon>
        <taxon>Oryzoideae</taxon>
        <taxon>Oryzeae</taxon>
        <taxon>Oryzinae</taxon>
        <taxon>Oryza</taxon>
        <taxon>Oryza sativa</taxon>
    </lineage>
</organism>
<dbReference type="EC" id="3.5.1.-"/>
<dbReference type="EMBL" id="AP005183">
    <property type="protein sequence ID" value="BAC20815.1"/>
    <property type="molecule type" value="Genomic_DNA"/>
</dbReference>
<dbReference type="EMBL" id="AP008213">
    <property type="protein sequence ID" value="BAF21208.1"/>
    <property type="status" value="ALT_SEQ"/>
    <property type="molecule type" value="Genomic_DNA"/>
</dbReference>
<dbReference type="EMBL" id="AP014963">
    <property type="status" value="NOT_ANNOTATED_CDS"/>
    <property type="molecule type" value="Genomic_DNA"/>
</dbReference>
<dbReference type="EMBL" id="AK110647">
    <property type="status" value="NOT_ANNOTATED_CDS"/>
    <property type="molecule type" value="mRNA"/>
</dbReference>
<dbReference type="SMR" id="Q8H3C8"/>
<dbReference type="FunCoup" id="Q8H3C8">
    <property type="interactions" value="414"/>
</dbReference>
<dbReference type="STRING" id="39947.Q8H3C8"/>
<dbReference type="MEROPS" id="M20.A02"/>
<dbReference type="PaxDb" id="39947-Q8H3C8"/>
<dbReference type="KEGG" id="dosa:Os07g0249800"/>
<dbReference type="eggNOG" id="ENOG502QQEM">
    <property type="taxonomic scope" value="Eukaryota"/>
</dbReference>
<dbReference type="InParanoid" id="Q8H3C8"/>
<dbReference type="PlantReactome" id="R-OSA-1119580">
    <property type="pathway name" value="IAA biosynthesis II"/>
</dbReference>
<dbReference type="Proteomes" id="UP000000763">
    <property type="component" value="Chromosome 7"/>
</dbReference>
<dbReference type="Proteomes" id="UP000059680">
    <property type="component" value="Chromosome 7"/>
</dbReference>
<dbReference type="GO" id="GO:0010179">
    <property type="term" value="F:IAA-Ala conjugate hydrolase activity"/>
    <property type="evidence" value="ECO:0000318"/>
    <property type="project" value="GO_Central"/>
</dbReference>
<dbReference type="GO" id="GO:0009850">
    <property type="term" value="P:auxin metabolic process"/>
    <property type="evidence" value="ECO:0000318"/>
    <property type="project" value="GO_Central"/>
</dbReference>
<dbReference type="CDD" id="cd08017">
    <property type="entry name" value="M20_IAA_Hyd"/>
    <property type="match status" value="1"/>
</dbReference>
<dbReference type="FunFam" id="3.30.70.360:FF:000001">
    <property type="entry name" value="N-acetyldiaminopimelate deacetylase"/>
    <property type="match status" value="1"/>
</dbReference>
<dbReference type="Gene3D" id="3.30.70.360">
    <property type="match status" value="1"/>
</dbReference>
<dbReference type="Gene3D" id="3.40.630.10">
    <property type="entry name" value="Zn peptidases"/>
    <property type="match status" value="1"/>
</dbReference>
<dbReference type="InterPro" id="IPR017439">
    <property type="entry name" value="Amidohydrolase"/>
</dbReference>
<dbReference type="InterPro" id="IPR036264">
    <property type="entry name" value="Bact_exopeptidase_dim_dom"/>
</dbReference>
<dbReference type="InterPro" id="IPR044757">
    <property type="entry name" value="ILR1-like_Hyd"/>
</dbReference>
<dbReference type="InterPro" id="IPR002933">
    <property type="entry name" value="Peptidase_M20"/>
</dbReference>
<dbReference type="InterPro" id="IPR011650">
    <property type="entry name" value="Peptidase_M20_dimer"/>
</dbReference>
<dbReference type="NCBIfam" id="TIGR01891">
    <property type="entry name" value="amidohydrolases"/>
    <property type="match status" value="1"/>
</dbReference>
<dbReference type="PANTHER" id="PTHR11014:SF149">
    <property type="entry name" value="IAA-AMINO ACID HYDROLASE ILR1-LIKE 8"/>
    <property type="match status" value="1"/>
</dbReference>
<dbReference type="PANTHER" id="PTHR11014">
    <property type="entry name" value="PEPTIDASE M20 FAMILY MEMBER"/>
    <property type="match status" value="1"/>
</dbReference>
<dbReference type="Pfam" id="PF07687">
    <property type="entry name" value="M20_dimer"/>
    <property type="match status" value="1"/>
</dbReference>
<dbReference type="Pfam" id="PF01546">
    <property type="entry name" value="Peptidase_M20"/>
    <property type="match status" value="1"/>
</dbReference>
<dbReference type="PIRSF" id="PIRSF005962">
    <property type="entry name" value="Pept_M20D_amidohydro"/>
    <property type="match status" value="1"/>
</dbReference>
<dbReference type="SUPFAM" id="SSF55031">
    <property type="entry name" value="Bacterial exopeptidase dimerisation domain"/>
    <property type="match status" value="1"/>
</dbReference>
<dbReference type="SUPFAM" id="SSF53187">
    <property type="entry name" value="Zn-dependent exopeptidases"/>
    <property type="match status" value="1"/>
</dbReference>
<keyword id="KW-0378">Hydrolase</keyword>
<keyword id="KW-1185">Reference proteome</keyword>
<keyword id="KW-0732">Signal</keyword>
<gene>
    <name type="primary">ILL8</name>
    <name type="ordered locus">Os07g0249800</name>
    <name type="ordered locus">LOC_Os07g14600</name>
    <name type="ORF">P0021G06.115</name>
</gene>
<proteinExistence type="evidence at transcript level"/>
<name>ILL8_ORYSJ</name>
<accession>Q8H3C8</accession>
<accession>Q0D7G5</accession>
<sequence>MAPPNASARLLLLVAAAAAVVLFAHLPTTTTAASPALKALGEDLLAAAGAAGFAGWLSGLRRRIHQRPELAFQEVRTSELVRAELDAIGVPYAWPVARTGVVATIDGGAGAGPVVALRADMDALPLQELVDWEFKSQEKGKMHACGHDAHVTMLLGAAKLLQSRKDELKGTIKLVFQPAEEGHAGAYHVLESGLLDDVSVIFGLHVIPNLPVGVVASRPGPFMSAAARFAATFTGKGGHAGVPHDAVDPVVAVSSAVLSLQQLVSRETDPLEAAVVSITILKGGDAYNVIPESASLGGTFRSMTDEGLAYLMKRIREIIEAQAGVNRCAAAVDFLEEELRPYPATVNDDGMYGHAKAVAEAMLGEANVRVAARSMGGEDFAFYARRSPGAFFFIGVGNETTMGPAAAVRPVHSPHFVLDERALPVGAALHAAVAIEYLNKHDCS</sequence>
<feature type="signal peptide" evidence="2">
    <location>
        <begin position="1"/>
        <end position="32"/>
    </location>
</feature>
<feature type="chain" id="PRO_0000351644" description="IAA-amino acid hydrolase ILR1-like 8">
    <location>
        <begin position="33"/>
        <end position="444"/>
    </location>
</feature>
<reference key="1">
    <citation type="journal article" date="2005" name="Nature">
        <title>The map-based sequence of the rice genome.</title>
        <authorList>
            <consortium name="International rice genome sequencing project (IRGSP)"/>
        </authorList>
    </citation>
    <scope>NUCLEOTIDE SEQUENCE [LARGE SCALE GENOMIC DNA]</scope>
    <source>
        <strain>cv. Nipponbare</strain>
    </source>
</reference>
<reference key="2">
    <citation type="journal article" date="2008" name="Nucleic Acids Res.">
        <title>The rice annotation project database (RAP-DB): 2008 update.</title>
        <authorList>
            <consortium name="The rice annotation project (RAP)"/>
        </authorList>
    </citation>
    <scope>GENOME REANNOTATION</scope>
    <source>
        <strain>cv. Nipponbare</strain>
    </source>
</reference>
<reference key="3">
    <citation type="journal article" date="2013" name="Rice">
        <title>Improvement of the Oryza sativa Nipponbare reference genome using next generation sequence and optical map data.</title>
        <authorList>
            <person name="Kawahara Y."/>
            <person name="de la Bastide M."/>
            <person name="Hamilton J.P."/>
            <person name="Kanamori H."/>
            <person name="McCombie W.R."/>
            <person name="Ouyang S."/>
            <person name="Schwartz D.C."/>
            <person name="Tanaka T."/>
            <person name="Wu J."/>
            <person name="Zhou S."/>
            <person name="Childs K.L."/>
            <person name="Davidson R.M."/>
            <person name="Lin H."/>
            <person name="Quesada-Ocampo L."/>
            <person name="Vaillancourt B."/>
            <person name="Sakai H."/>
            <person name="Lee S.S."/>
            <person name="Kim J."/>
            <person name="Numa H."/>
            <person name="Itoh T."/>
            <person name="Buell C.R."/>
            <person name="Matsumoto T."/>
        </authorList>
    </citation>
    <scope>GENOME REANNOTATION</scope>
    <source>
        <strain>cv. Nipponbare</strain>
    </source>
</reference>
<reference key="4">
    <citation type="journal article" date="2003" name="Science">
        <title>Collection, mapping, and annotation of over 28,000 cDNA clones from japonica rice.</title>
        <authorList>
            <consortium name="The rice full-length cDNA consortium"/>
        </authorList>
    </citation>
    <scope>NUCLEOTIDE SEQUENCE [LARGE SCALE MRNA] OF 162-444</scope>
    <source>
        <strain>cv. Nipponbare</strain>
    </source>
</reference>